<keyword id="KW-1003">Cell membrane</keyword>
<keyword id="KW-0133">Cell shape</keyword>
<keyword id="KW-0961">Cell wall biogenesis/degradation</keyword>
<keyword id="KW-0328">Glycosyltransferase</keyword>
<keyword id="KW-0472">Membrane</keyword>
<keyword id="KW-0573">Peptidoglycan synthesis</keyword>
<keyword id="KW-0808">Transferase</keyword>
<keyword id="KW-0812">Transmembrane</keyword>
<keyword id="KW-1133">Transmembrane helix</keyword>
<protein>
    <recommendedName>
        <fullName evidence="1">Monofunctional glycosyltransferase</fullName>
        <shortName evidence="1">MGT</shortName>
        <ecNumber evidence="1">2.4.99.28</ecNumber>
    </recommendedName>
    <alternativeName>
        <fullName evidence="1">Peptidoglycan TGase</fullName>
    </alternativeName>
</protein>
<evidence type="ECO:0000255" key="1">
    <source>
        <dbReference type="HAMAP-Rule" id="MF_01434"/>
    </source>
</evidence>
<feature type="chain" id="PRO_1000087440" description="Monofunctional glycosyltransferase">
    <location>
        <begin position="1"/>
        <end position="269"/>
    </location>
</feature>
<feature type="transmembrane region" description="Helical" evidence="1">
    <location>
        <begin position="46"/>
        <end position="66"/>
    </location>
</feature>
<proteinExistence type="inferred from homology"/>
<dbReference type="EC" id="2.4.99.28" evidence="1"/>
<dbReference type="EMBL" id="CP000703">
    <property type="protein sequence ID" value="ABQ49713.1"/>
    <property type="molecule type" value="Genomic_DNA"/>
</dbReference>
<dbReference type="SMR" id="A5IU40"/>
<dbReference type="CAZy" id="GT51">
    <property type="family name" value="Glycosyltransferase Family 51"/>
</dbReference>
<dbReference type="KEGG" id="saj:SaurJH9_1928"/>
<dbReference type="HOGENOM" id="CLU_006354_1_2_9"/>
<dbReference type="UniPathway" id="UPA00219"/>
<dbReference type="GO" id="GO:0030288">
    <property type="term" value="C:outer membrane-bounded periplasmic space"/>
    <property type="evidence" value="ECO:0007669"/>
    <property type="project" value="TreeGrafter"/>
</dbReference>
<dbReference type="GO" id="GO:0005886">
    <property type="term" value="C:plasma membrane"/>
    <property type="evidence" value="ECO:0007669"/>
    <property type="project" value="UniProtKB-SubCell"/>
</dbReference>
<dbReference type="GO" id="GO:0008955">
    <property type="term" value="F:peptidoglycan glycosyltransferase activity"/>
    <property type="evidence" value="ECO:0007669"/>
    <property type="project" value="UniProtKB-UniRule"/>
</dbReference>
<dbReference type="GO" id="GO:0071555">
    <property type="term" value="P:cell wall organization"/>
    <property type="evidence" value="ECO:0007669"/>
    <property type="project" value="UniProtKB-KW"/>
</dbReference>
<dbReference type="GO" id="GO:0009252">
    <property type="term" value="P:peptidoglycan biosynthetic process"/>
    <property type="evidence" value="ECO:0007669"/>
    <property type="project" value="UniProtKB-UniRule"/>
</dbReference>
<dbReference type="GO" id="GO:0008360">
    <property type="term" value="P:regulation of cell shape"/>
    <property type="evidence" value="ECO:0007669"/>
    <property type="project" value="UniProtKB-KW"/>
</dbReference>
<dbReference type="Gene3D" id="1.10.3810.10">
    <property type="entry name" value="Biosynthetic peptidoglycan transglycosylase-like"/>
    <property type="match status" value="1"/>
</dbReference>
<dbReference type="HAMAP" id="MF_01434">
    <property type="entry name" value="MGT"/>
    <property type="match status" value="1"/>
</dbReference>
<dbReference type="InterPro" id="IPR001264">
    <property type="entry name" value="Glyco_trans_51"/>
</dbReference>
<dbReference type="InterPro" id="IPR050396">
    <property type="entry name" value="Glycosyltr_51/Transpeptidase"/>
</dbReference>
<dbReference type="InterPro" id="IPR023346">
    <property type="entry name" value="Lysozyme-like_dom_sf"/>
</dbReference>
<dbReference type="InterPro" id="IPR022978">
    <property type="entry name" value="Monofunct_glyco_trans"/>
</dbReference>
<dbReference type="InterPro" id="IPR036950">
    <property type="entry name" value="PBP_transglycosylase"/>
</dbReference>
<dbReference type="NCBIfam" id="NF010008">
    <property type="entry name" value="PRK13481.1"/>
    <property type="match status" value="1"/>
</dbReference>
<dbReference type="PANTHER" id="PTHR32282">
    <property type="entry name" value="BINDING PROTEIN TRANSPEPTIDASE, PUTATIVE-RELATED"/>
    <property type="match status" value="1"/>
</dbReference>
<dbReference type="PANTHER" id="PTHR32282:SF11">
    <property type="entry name" value="PENICILLIN-BINDING PROTEIN 1B"/>
    <property type="match status" value="1"/>
</dbReference>
<dbReference type="Pfam" id="PF00912">
    <property type="entry name" value="Transgly"/>
    <property type="match status" value="1"/>
</dbReference>
<dbReference type="SUPFAM" id="SSF53955">
    <property type="entry name" value="Lysozyme-like"/>
    <property type="match status" value="1"/>
</dbReference>
<comment type="function">
    <text evidence="1">Peptidoglycan polymerase that catalyzes glycan chain elongation using lipid-linked disaccharide-pentapeptide as the substrate.</text>
</comment>
<comment type="catalytic activity">
    <reaction evidence="1">
        <text>[GlcNAc-(1-&gt;4)-Mur2Ac(oyl-L-Ala-gamma-D-Glu-L-Lys-D-Ala-D-Ala)](n)-di-trans,octa-cis-undecaprenyl diphosphate + beta-D-GlcNAc-(1-&gt;4)-Mur2Ac(oyl-L-Ala-gamma-D-Glu-L-Lys-D-Ala-D-Ala)-di-trans,octa-cis-undecaprenyl diphosphate = [GlcNAc-(1-&gt;4)-Mur2Ac(oyl-L-Ala-gamma-D-Glu-L-Lys-D-Ala-D-Ala)](n+1)-di-trans,octa-cis-undecaprenyl diphosphate + di-trans,octa-cis-undecaprenyl diphosphate + H(+)</text>
        <dbReference type="Rhea" id="RHEA:23708"/>
        <dbReference type="Rhea" id="RHEA-COMP:9602"/>
        <dbReference type="Rhea" id="RHEA-COMP:9603"/>
        <dbReference type="ChEBI" id="CHEBI:15378"/>
        <dbReference type="ChEBI" id="CHEBI:58405"/>
        <dbReference type="ChEBI" id="CHEBI:60033"/>
        <dbReference type="ChEBI" id="CHEBI:78435"/>
        <dbReference type="EC" id="2.4.99.28"/>
    </reaction>
</comment>
<comment type="pathway">
    <text evidence="1">Cell wall biogenesis; peptidoglycan biosynthesis.</text>
</comment>
<comment type="subcellular location">
    <subcellularLocation>
        <location evidence="1">Cell membrane</location>
        <topology evidence="1">Single-pass membrane protein</topology>
    </subcellularLocation>
</comment>
<comment type="similarity">
    <text evidence="1">Belongs to the glycosyltransferase 51 family.</text>
</comment>
<reference key="1">
    <citation type="submission" date="2007-05" db="EMBL/GenBank/DDBJ databases">
        <title>Complete sequence of chromosome of Staphylococcus aureus subsp. aureus JH9.</title>
        <authorList>
            <consortium name="US DOE Joint Genome Institute"/>
            <person name="Copeland A."/>
            <person name="Lucas S."/>
            <person name="Lapidus A."/>
            <person name="Barry K."/>
            <person name="Detter J.C."/>
            <person name="Glavina del Rio T."/>
            <person name="Hammon N."/>
            <person name="Israni S."/>
            <person name="Pitluck S."/>
            <person name="Chain P."/>
            <person name="Malfatti S."/>
            <person name="Shin M."/>
            <person name="Vergez L."/>
            <person name="Schmutz J."/>
            <person name="Larimer F."/>
            <person name="Land M."/>
            <person name="Hauser L."/>
            <person name="Kyrpides N."/>
            <person name="Kim E."/>
            <person name="Tomasz A."/>
            <person name="Richardson P."/>
        </authorList>
    </citation>
    <scope>NUCLEOTIDE SEQUENCE [LARGE SCALE GENOMIC DNA]</scope>
    <source>
        <strain>JH9</strain>
    </source>
</reference>
<name>MGT_STAA9</name>
<sequence>MKRSDRYSNSNEHFEHMKHEPHYNTYYQPVGKPPKKKKSKRILLKILLTILIIIALFIGIMYFLSTRDNVDELRKIENKSSFVSADNVPEYVKGAFISMEDERFYNHHGFDLKGTTRALFSTISDRDVQGGSTITQQVVKNYFYDNDRSFTRKVKELFVAHRVEKQYNKNEILSFYLNNIYFGDNQYTLEGAANHYFGTTVNKNSTTMSHITVLQSAILASKVNAPSVYNINNMSENFTQRVSTNLEKMKQQNYINETQYQQAMSQLNR</sequence>
<accession>A5IU40</accession>
<gene>
    <name evidence="1" type="primary">mgt</name>
    <name type="ordered locus">SaurJH9_1928</name>
</gene>
<organism>
    <name type="scientific">Staphylococcus aureus (strain JH9)</name>
    <dbReference type="NCBI Taxonomy" id="359786"/>
    <lineage>
        <taxon>Bacteria</taxon>
        <taxon>Bacillati</taxon>
        <taxon>Bacillota</taxon>
        <taxon>Bacilli</taxon>
        <taxon>Bacillales</taxon>
        <taxon>Staphylococcaceae</taxon>
        <taxon>Staphylococcus</taxon>
    </lineage>
</organism>